<comment type="function">
    <text>Involved in oxygen transport from the lung to the various peripheral tissues.</text>
</comment>
<comment type="subunit">
    <text>Heterotetramer of two alpha chains and two beta chains.</text>
</comment>
<comment type="tissue specificity">
    <text>Red blood cells.</text>
</comment>
<comment type="polymorphism">
    <text>There are two alleles. The sequence shown is that of alpha-1.</text>
</comment>
<comment type="similarity">
    <text evidence="3">Belongs to the globin family.</text>
</comment>
<proteinExistence type="evidence at protein level"/>
<sequence>VLSPADKTNVKDAWGKVGGHAGEYGAEALERMFLSFPTTKTYFPHFDLSHGSAQVKGHGKKVADALTLAVGHVDDMPQALSALSDLHAHKLRVDPVNFKLLSHCLLVTLAAHLPAEFTPAVHASLDKFLASVSTVLTSKYR</sequence>
<keyword id="KW-0007">Acetylation</keyword>
<keyword id="KW-0903">Direct protein sequencing</keyword>
<keyword id="KW-0349">Heme</keyword>
<keyword id="KW-0408">Iron</keyword>
<keyword id="KW-0479">Metal-binding</keyword>
<keyword id="KW-0561">Oxygen transport</keyword>
<keyword id="KW-0597">Phosphoprotein</keyword>
<keyword id="KW-0813">Transport</keyword>
<protein>
    <recommendedName>
        <fullName>Hemoglobin subunit alpha-1/2</fullName>
    </recommendedName>
    <alternativeName>
        <fullName>Alpha-1/2-globin</fullName>
    </alternativeName>
    <alternativeName>
        <fullName>Hemoglobin alpha-1/2 chain</fullName>
    </alternativeName>
</protein>
<accession>P21768</accession>
<reference key="1">
    <citation type="journal article" date="1984" name="Seikagaku">
        <title>The primary structure of hemoglobin alpha in Macaca speciosa and Macaca sinica.</title>
        <authorList>
            <person name="Maita T."/>
            <person name="Tanioka Y."/>
            <person name="Shotake T."/>
            <person name="Matsuda G."/>
        </authorList>
    </citation>
    <scope>PROTEIN SEQUENCE</scope>
</reference>
<name>HBA_MACSI</name>
<organism>
    <name type="scientific">Macaca sinica</name>
    <name type="common">Toque macaque</name>
    <name type="synonym">Toque monkey</name>
    <dbReference type="NCBI Taxonomy" id="9552"/>
    <lineage>
        <taxon>Eukaryota</taxon>
        <taxon>Metazoa</taxon>
        <taxon>Chordata</taxon>
        <taxon>Craniata</taxon>
        <taxon>Vertebrata</taxon>
        <taxon>Euteleostomi</taxon>
        <taxon>Mammalia</taxon>
        <taxon>Eutheria</taxon>
        <taxon>Euarchontoglires</taxon>
        <taxon>Primates</taxon>
        <taxon>Haplorrhini</taxon>
        <taxon>Catarrhini</taxon>
        <taxon>Cercopithecidae</taxon>
        <taxon>Cercopithecinae</taxon>
        <taxon>Macaca</taxon>
    </lineage>
</organism>
<evidence type="ECO:0000250" key="1">
    <source>
        <dbReference type="UniProtKB" id="P01942"/>
    </source>
</evidence>
<evidence type="ECO:0000250" key="2">
    <source>
        <dbReference type="UniProtKB" id="P69905"/>
    </source>
</evidence>
<evidence type="ECO:0000255" key="3">
    <source>
        <dbReference type="PROSITE-ProRule" id="PRU00238"/>
    </source>
</evidence>
<dbReference type="SMR" id="P21768"/>
<dbReference type="GO" id="GO:0072562">
    <property type="term" value="C:blood microparticle"/>
    <property type="evidence" value="ECO:0007669"/>
    <property type="project" value="TreeGrafter"/>
</dbReference>
<dbReference type="GO" id="GO:0031838">
    <property type="term" value="C:haptoglobin-hemoglobin complex"/>
    <property type="evidence" value="ECO:0007669"/>
    <property type="project" value="TreeGrafter"/>
</dbReference>
<dbReference type="GO" id="GO:0005833">
    <property type="term" value="C:hemoglobin complex"/>
    <property type="evidence" value="ECO:0007669"/>
    <property type="project" value="InterPro"/>
</dbReference>
<dbReference type="GO" id="GO:0031720">
    <property type="term" value="F:haptoglobin binding"/>
    <property type="evidence" value="ECO:0007669"/>
    <property type="project" value="TreeGrafter"/>
</dbReference>
<dbReference type="GO" id="GO:0020037">
    <property type="term" value="F:heme binding"/>
    <property type="evidence" value="ECO:0007669"/>
    <property type="project" value="InterPro"/>
</dbReference>
<dbReference type="GO" id="GO:0005506">
    <property type="term" value="F:iron ion binding"/>
    <property type="evidence" value="ECO:0007669"/>
    <property type="project" value="InterPro"/>
</dbReference>
<dbReference type="GO" id="GO:0043177">
    <property type="term" value="F:organic acid binding"/>
    <property type="evidence" value="ECO:0007669"/>
    <property type="project" value="TreeGrafter"/>
</dbReference>
<dbReference type="GO" id="GO:0019825">
    <property type="term" value="F:oxygen binding"/>
    <property type="evidence" value="ECO:0007669"/>
    <property type="project" value="InterPro"/>
</dbReference>
<dbReference type="GO" id="GO:0005344">
    <property type="term" value="F:oxygen carrier activity"/>
    <property type="evidence" value="ECO:0007669"/>
    <property type="project" value="UniProtKB-KW"/>
</dbReference>
<dbReference type="GO" id="GO:0004601">
    <property type="term" value="F:peroxidase activity"/>
    <property type="evidence" value="ECO:0007669"/>
    <property type="project" value="TreeGrafter"/>
</dbReference>
<dbReference type="GO" id="GO:0042744">
    <property type="term" value="P:hydrogen peroxide catabolic process"/>
    <property type="evidence" value="ECO:0007669"/>
    <property type="project" value="TreeGrafter"/>
</dbReference>
<dbReference type="CDD" id="cd08927">
    <property type="entry name" value="Hb-alpha-like"/>
    <property type="match status" value="1"/>
</dbReference>
<dbReference type="FunFam" id="1.10.490.10:FF:000002">
    <property type="entry name" value="Hemoglobin subunit alpha"/>
    <property type="match status" value="1"/>
</dbReference>
<dbReference type="Gene3D" id="1.10.490.10">
    <property type="entry name" value="Globins"/>
    <property type="match status" value="1"/>
</dbReference>
<dbReference type="InterPro" id="IPR000971">
    <property type="entry name" value="Globin"/>
</dbReference>
<dbReference type="InterPro" id="IPR009050">
    <property type="entry name" value="Globin-like_sf"/>
</dbReference>
<dbReference type="InterPro" id="IPR012292">
    <property type="entry name" value="Globin/Proto"/>
</dbReference>
<dbReference type="InterPro" id="IPR002338">
    <property type="entry name" value="Hemoglobin_a-typ"/>
</dbReference>
<dbReference type="InterPro" id="IPR050056">
    <property type="entry name" value="Hemoglobin_oxygen_transport"/>
</dbReference>
<dbReference type="InterPro" id="IPR002339">
    <property type="entry name" value="Hemoglobin_pi"/>
</dbReference>
<dbReference type="PANTHER" id="PTHR11442">
    <property type="entry name" value="HEMOGLOBIN FAMILY MEMBER"/>
    <property type="match status" value="1"/>
</dbReference>
<dbReference type="PANTHER" id="PTHR11442:SF48">
    <property type="entry name" value="HEMOGLOBIN SUBUNIT ALPHA"/>
    <property type="match status" value="1"/>
</dbReference>
<dbReference type="Pfam" id="PF00042">
    <property type="entry name" value="Globin"/>
    <property type="match status" value="1"/>
</dbReference>
<dbReference type="PRINTS" id="PR00612">
    <property type="entry name" value="ALPHAHAEM"/>
</dbReference>
<dbReference type="PRINTS" id="PR00815">
    <property type="entry name" value="PIHAEM"/>
</dbReference>
<dbReference type="SUPFAM" id="SSF46458">
    <property type="entry name" value="Globin-like"/>
    <property type="match status" value="1"/>
</dbReference>
<dbReference type="PROSITE" id="PS01033">
    <property type="entry name" value="GLOBIN"/>
    <property type="match status" value="1"/>
</dbReference>
<feature type="chain" id="PRO_0000052682" description="Hemoglobin subunit alpha-1/2">
    <location>
        <begin position="1"/>
        <end position="141"/>
    </location>
</feature>
<feature type="domain" description="Globin" evidence="3">
    <location>
        <begin position="1"/>
        <end position="141"/>
    </location>
</feature>
<feature type="binding site" evidence="3">
    <location>
        <position position="58"/>
    </location>
    <ligand>
        <name>O2</name>
        <dbReference type="ChEBI" id="CHEBI:15379"/>
    </ligand>
</feature>
<feature type="binding site" description="proximal binding residue" evidence="3">
    <location>
        <position position="87"/>
    </location>
    <ligand>
        <name>heme b</name>
        <dbReference type="ChEBI" id="CHEBI:60344"/>
    </ligand>
    <ligandPart>
        <name>Fe</name>
        <dbReference type="ChEBI" id="CHEBI:18248"/>
    </ligandPart>
</feature>
<feature type="modified residue" description="Phosphoserine" evidence="2">
    <location>
        <position position="3"/>
    </location>
</feature>
<feature type="modified residue" description="N6-succinyllysine" evidence="1">
    <location>
        <position position="7"/>
    </location>
</feature>
<feature type="modified residue" description="Phosphothreonine" evidence="2">
    <location>
        <position position="8"/>
    </location>
</feature>
<feature type="modified residue" description="N6-succinyllysine" evidence="1">
    <location>
        <position position="11"/>
    </location>
</feature>
<feature type="modified residue" description="N6-acetyllysine; alternate" evidence="2">
    <location>
        <position position="16"/>
    </location>
</feature>
<feature type="modified residue" description="N6-succinyllysine; alternate" evidence="1">
    <location>
        <position position="16"/>
    </location>
</feature>
<feature type="modified residue" description="Phosphotyrosine" evidence="2">
    <location>
        <position position="24"/>
    </location>
</feature>
<feature type="modified residue" description="Phosphoserine" evidence="2">
    <location>
        <position position="35"/>
    </location>
</feature>
<feature type="modified residue" description="N6-succinyllysine" evidence="1">
    <location>
        <position position="40"/>
    </location>
</feature>
<feature type="modified residue" description="Phosphoserine" evidence="2">
    <location>
        <position position="49"/>
    </location>
</feature>
<feature type="modified residue" description="Phosphoserine" evidence="1">
    <location>
        <position position="102"/>
    </location>
</feature>
<feature type="modified residue" description="Phosphothreonine" evidence="1">
    <location>
        <position position="108"/>
    </location>
</feature>
<feature type="modified residue" description="Phosphoserine" evidence="1">
    <location>
        <position position="124"/>
    </location>
</feature>
<feature type="modified residue" description="Phosphoserine" evidence="1">
    <location>
        <position position="131"/>
    </location>
</feature>
<feature type="modified residue" description="Phosphothreonine" evidence="1">
    <location>
        <position position="134"/>
    </location>
</feature>
<feature type="modified residue" description="Phosphothreonine" evidence="1">
    <location>
        <position position="137"/>
    </location>
</feature>
<feature type="modified residue" description="Phosphoserine" evidence="1">
    <location>
        <position position="138"/>
    </location>
</feature>
<feature type="sequence variant" description="In alpha-2.">
    <original>D</original>
    <variation>A</variation>
    <location>
        <position position="12"/>
    </location>
</feature>